<keyword id="KW-0169">Cobalamin biosynthesis</keyword>
<keyword id="KW-0315">Glutamine amidotransferase</keyword>
<accession>B2G9H7</accession>
<sequence>MTVQSIMFQGTASDAGKSWLAAAVCRILANRGQKVAPFKSQNMALNSFITEKGDEMGRAQVFQAEAAKVKPDVRMNPILLKPSTDKDSQVIVMGKVLKNMDAVSYYQFKRELIPQIMMAYNTLADENDVIVLEGAGSPAEINLNENDIVNMGMARMADAPVILVADIDKGGVFASIYGTIKLMPREDQQRIKGIIINKFRGDKSLLESGNKMIEKLTGIPVIGVLPMSSIDIDEEDSVSLIRKPRQKDTQKDLDVAVIDLDKISNFTDIHSLEIQPDVSVRYVLTAEELGTPDLLIIPGSKNTNADLVALRKNGIAEGILRAHKDGSMIVGICGGYQILGQMLYDPTGIESPIKEQKGLGLLDTETTFNEKKTTTQAVAKRNNYILKGYEIHMGTTKRGLNSTPFSTIQETNGQPENREDGAVSTDGTVIGTYLHGIFDNPYWTRHLLNQLRVAKGMAPLVDTTVSISGYKDQQYEKLAQLFAQNVDMDKFNQILQDSTKE</sequence>
<proteinExistence type="inferred from homology"/>
<evidence type="ECO:0000255" key="1">
    <source>
        <dbReference type="HAMAP-Rule" id="MF_00028"/>
    </source>
</evidence>
<reference key="1">
    <citation type="journal article" date="2008" name="DNA Res.">
        <title>Comparative genome analysis of Lactobacillus reuteri and Lactobacillus fermentum reveal a genomic island for reuterin and cobalamin production.</title>
        <authorList>
            <person name="Morita H."/>
            <person name="Toh H."/>
            <person name="Fukuda S."/>
            <person name="Horikawa H."/>
            <person name="Oshima K."/>
            <person name="Suzuki T."/>
            <person name="Murakami M."/>
            <person name="Hisamatsu S."/>
            <person name="Kato Y."/>
            <person name="Takizawa T."/>
            <person name="Fukuoka H."/>
            <person name="Yoshimura T."/>
            <person name="Itoh K."/>
            <person name="O'Sullivan D.J."/>
            <person name="McKay L.L."/>
            <person name="Ohno H."/>
            <person name="Kikuchi J."/>
            <person name="Masaoka T."/>
            <person name="Hattori M."/>
        </authorList>
    </citation>
    <scope>NUCLEOTIDE SEQUENCE [LARGE SCALE GENOMIC DNA]</scope>
    <source>
        <strain>JCM 1112</strain>
    </source>
</reference>
<name>COBQ_LIMRJ</name>
<gene>
    <name evidence="1" type="primary">cobQ</name>
    <name type="ordered locus">LAR_1593</name>
</gene>
<protein>
    <recommendedName>
        <fullName evidence="1">Cobyric acid synthase</fullName>
    </recommendedName>
</protein>
<comment type="function">
    <text evidence="1">Catalyzes amidations at positions B, D, E, and G on adenosylcobyrinic A,C-diamide. NH(2) groups are provided by glutamine, and one molecule of ATP is hydrogenolyzed for each amidation.</text>
</comment>
<comment type="pathway">
    <text evidence="1">Cofactor biosynthesis; adenosylcobalamin biosynthesis.</text>
</comment>
<comment type="similarity">
    <text evidence="1">Belongs to the CobB/CobQ family. CobQ subfamily.</text>
</comment>
<dbReference type="EMBL" id="AP007281">
    <property type="protein sequence ID" value="BAG26109.1"/>
    <property type="molecule type" value="Genomic_DNA"/>
</dbReference>
<dbReference type="RefSeq" id="WP_003669125.1">
    <property type="nucleotide sequence ID" value="NC_010609.1"/>
</dbReference>
<dbReference type="SMR" id="B2G9H7"/>
<dbReference type="KEGG" id="lrf:LAR_1593"/>
<dbReference type="HOGENOM" id="CLU_019250_2_2_9"/>
<dbReference type="UniPathway" id="UPA00148"/>
<dbReference type="GO" id="GO:0015420">
    <property type="term" value="F:ABC-type vitamin B12 transporter activity"/>
    <property type="evidence" value="ECO:0007669"/>
    <property type="project" value="UniProtKB-UniRule"/>
</dbReference>
<dbReference type="GO" id="GO:0003824">
    <property type="term" value="F:catalytic activity"/>
    <property type="evidence" value="ECO:0007669"/>
    <property type="project" value="InterPro"/>
</dbReference>
<dbReference type="GO" id="GO:0009236">
    <property type="term" value="P:cobalamin biosynthetic process"/>
    <property type="evidence" value="ECO:0007669"/>
    <property type="project" value="UniProtKB-UniRule"/>
</dbReference>
<dbReference type="CDD" id="cd05389">
    <property type="entry name" value="CobQ_N"/>
    <property type="match status" value="1"/>
</dbReference>
<dbReference type="CDD" id="cd01750">
    <property type="entry name" value="GATase1_CobQ"/>
    <property type="match status" value="1"/>
</dbReference>
<dbReference type="Gene3D" id="3.40.50.880">
    <property type="match status" value="1"/>
</dbReference>
<dbReference type="Gene3D" id="3.40.50.300">
    <property type="entry name" value="P-loop containing nucleotide triphosphate hydrolases"/>
    <property type="match status" value="1"/>
</dbReference>
<dbReference type="HAMAP" id="MF_00028">
    <property type="entry name" value="CobQ"/>
    <property type="match status" value="1"/>
</dbReference>
<dbReference type="InterPro" id="IPR029062">
    <property type="entry name" value="Class_I_gatase-like"/>
</dbReference>
<dbReference type="InterPro" id="IPR002586">
    <property type="entry name" value="CobQ/CobB/MinD/ParA_Nub-bd_dom"/>
</dbReference>
<dbReference type="InterPro" id="IPR033949">
    <property type="entry name" value="CobQ_GATase1"/>
</dbReference>
<dbReference type="InterPro" id="IPR047045">
    <property type="entry name" value="CobQ_N"/>
</dbReference>
<dbReference type="InterPro" id="IPR004459">
    <property type="entry name" value="CobQ_synth"/>
</dbReference>
<dbReference type="InterPro" id="IPR011698">
    <property type="entry name" value="GATase_3"/>
</dbReference>
<dbReference type="InterPro" id="IPR027417">
    <property type="entry name" value="P-loop_NTPase"/>
</dbReference>
<dbReference type="NCBIfam" id="TIGR00313">
    <property type="entry name" value="cobQ"/>
    <property type="match status" value="1"/>
</dbReference>
<dbReference type="NCBIfam" id="NF001989">
    <property type="entry name" value="PRK00784.1"/>
    <property type="match status" value="1"/>
</dbReference>
<dbReference type="PANTHER" id="PTHR21343:SF1">
    <property type="entry name" value="COBYRIC ACID SYNTHASE"/>
    <property type="match status" value="1"/>
</dbReference>
<dbReference type="PANTHER" id="PTHR21343">
    <property type="entry name" value="DETHIOBIOTIN SYNTHETASE"/>
    <property type="match status" value="1"/>
</dbReference>
<dbReference type="Pfam" id="PF01656">
    <property type="entry name" value="CbiA"/>
    <property type="match status" value="1"/>
</dbReference>
<dbReference type="Pfam" id="PF07685">
    <property type="entry name" value="GATase_3"/>
    <property type="match status" value="1"/>
</dbReference>
<dbReference type="SUPFAM" id="SSF52317">
    <property type="entry name" value="Class I glutamine amidotransferase-like"/>
    <property type="match status" value="1"/>
</dbReference>
<dbReference type="SUPFAM" id="SSF52540">
    <property type="entry name" value="P-loop containing nucleoside triphosphate hydrolases"/>
    <property type="match status" value="1"/>
</dbReference>
<dbReference type="PROSITE" id="PS51274">
    <property type="entry name" value="GATASE_COBBQ"/>
    <property type="match status" value="1"/>
</dbReference>
<organism>
    <name type="scientific">Limosilactobacillus reuteri subsp. reuteri (strain JCM 1112)</name>
    <name type="common">Lactobacillus reuteri</name>
    <dbReference type="NCBI Taxonomy" id="557433"/>
    <lineage>
        <taxon>Bacteria</taxon>
        <taxon>Bacillati</taxon>
        <taxon>Bacillota</taxon>
        <taxon>Bacilli</taxon>
        <taxon>Lactobacillales</taxon>
        <taxon>Lactobacillaceae</taxon>
        <taxon>Limosilactobacillus</taxon>
    </lineage>
</organism>
<feature type="chain" id="PRO_1000090231" description="Cobyric acid synthase">
    <location>
        <begin position="1"/>
        <end position="501"/>
    </location>
</feature>
<feature type="domain" description="GATase cobBQ-type" evidence="1">
    <location>
        <begin position="252"/>
        <end position="443"/>
    </location>
</feature>
<feature type="active site" description="Nucleophile" evidence="1">
    <location>
        <position position="333"/>
    </location>
</feature>
<feature type="active site" evidence="1">
    <location>
        <position position="435"/>
    </location>
</feature>